<feature type="chain" id="PRO_0000074171" description="Limonoid UDP-glucosyltransferase">
    <location>
        <begin position="1"/>
        <end position="511"/>
    </location>
</feature>
<feature type="active site" description="Proton acceptor" evidence="1">
    <location>
        <position position="19"/>
    </location>
</feature>
<feature type="binding site" evidence="2">
    <location>
        <position position="19"/>
    </location>
    <ligand>
        <name>an anthocyanidin</name>
        <dbReference type="ChEBI" id="CHEBI:143576"/>
    </ligand>
</feature>
<feature type="binding site" evidence="1">
    <location>
        <position position="344"/>
    </location>
    <ligand>
        <name>UDP-alpha-D-glucose</name>
        <dbReference type="ChEBI" id="CHEBI:58885"/>
    </ligand>
</feature>
<feature type="binding site" evidence="1">
    <location>
        <position position="359"/>
    </location>
    <ligand>
        <name>UDP-alpha-D-glucose</name>
        <dbReference type="ChEBI" id="CHEBI:58885"/>
    </ligand>
</feature>
<feature type="binding site" evidence="1">
    <location>
        <position position="362"/>
    </location>
    <ligand>
        <name>UDP-alpha-D-glucose</name>
        <dbReference type="ChEBI" id="CHEBI:58885"/>
    </ligand>
</feature>
<feature type="binding site" evidence="1">
    <location>
        <position position="363"/>
    </location>
    <ligand>
        <name>UDP-alpha-D-glucose</name>
        <dbReference type="ChEBI" id="CHEBI:58885"/>
    </ligand>
</feature>
<feature type="binding site" evidence="1">
    <location>
        <position position="364"/>
    </location>
    <ligand>
        <name>UDP-alpha-D-glucose</name>
        <dbReference type="ChEBI" id="CHEBI:58885"/>
    </ligand>
</feature>
<feature type="binding site" evidence="1">
    <location>
        <position position="367"/>
    </location>
    <ligand>
        <name>UDP-alpha-D-glucose</name>
        <dbReference type="ChEBI" id="CHEBI:58885"/>
    </ligand>
</feature>
<feature type="binding site" evidence="2">
    <location>
        <position position="382"/>
    </location>
    <ligand>
        <name>an anthocyanidin</name>
        <dbReference type="ChEBI" id="CHEBI:143576"/>
    </ligand>
</feature>
<feature type="binding site" evidence="1">
    <location>
        <position position="383"/>
    </location>
    <ligand>
        <name>UDP-alpha-D-glucose</name>
        <dbReference type="ChEBI" id="CHEBI:58885"/>
    </ligand>
</feature>
<feature type="binding site" evidence="1">
    <location>
        <position position="384"/>
    </location>
    <ligand>
        <name>UDP-alpha-D-glucose</name>
        <dbReference type="ChEBI" id="CHEBI:58885"/>
    </ligand>
</feature>
<organism>
    <name type="scientific">Citrus unshiu</name>
    <name type="common">Satsuma mandarin</name>
    <name type="synonym">Citrus nobilis var. unshiu</name>
    <dbReference type="NCBI Taxonomy" id="55188"/>
    <lineage>
        <taxon>Eukaryota</taxon>
        <taxon>Viridiplantae</taxon>
        <taxon>Streptophyta</taxon>
        <taxon>Embryophyta</taxon>
        <taxon>Tracheophyta</taxon>
        <taxon>Spermatophyta</taxon>
        <taxon>Magnoliopsida</taxon>
        <taxon>eudicotyledons</taxon>
        <taxon>Gunneridae</taxon>
        <taxon>Pentapetalae</taxon>
        <taxon>rosids</taxon>
        <taxon>malvids</taxon>
        <taxon>Sapindales</taxon>
        <taxon>Rutaceae</taxon>
        <taxon>Aurantioideae</taxon>
        <taxon>Citrus</taxon>
    </lineage>
</organism>
<comment type="function">
    <text>Involved in the glucosylation of limonoids.</text>
</comment>
<comment type="catalytic activity">
    <reaction>
        <text>limonin + UDP-alpha-D-glucose + H2O = limonin 17-beta-D-glucoside + UDP + 2 H(+)</text>
        <dbReference type="Rhea" id="RHEA:11256"/>
        <dbReference type="ChEBI" id="CHEBI:15377"/>
        <dbReference type="ChEBI" id="CHEBI:15378"/>
        <dbReference type="ChEBI" id="CHEBI:16226"/>
        <dbReference type="ChEBI" id="CHEBI:57626"/>
        <dbReference type="ChEBI" id="CHEBI:58223"/>
        <dbReference type="ChEBI" id="CHEBI:58885"/>
        <dbReference type="EC" id="2.4.1.210"/>
    </reaction>
</comment>
<comment type="similarity">
    <text evidence="3">Belongs to the UDP-glycosyltransferase family.</text>
</comment>
<keyword id="KW-0328">Glycosyltransferase</keyword>
<keyword id="KW-0808">Transferase</keyword>
<evidence type="ECO:0000250" key="1">
    <source>
        <dbReference type="UniProtKB" id="A0A0A1HA03"/>
    </source>
</evidence>
<evidence type="ECO:0000250" key="2">
    <source>
        <dbReference type="UniProtKB" id="P51094"/>
    </source>
</evidence>
<evidence type="ECO:0000305" key="3"/>
<name>LGT_CITUN</name>
<proteinExistence type="evidence at transcript level"/>
<reference key="1">
    <citation type="journal article" date="2000" name="FEBS Lett.">
        <title>Molecular cloning and characterization of a novel gene encoding limonoid UDP-glucosyltransferase in Citrus.</title>
        <authorList>
            <person name="Kita M."/>
            <person name="Hirata Y."/>
            <person name="Moriguchi T."/>
            <person name="Endo-Inagaki T."/>
            <person name="Matsumoto R."/>
            <person name="Hasegawa S."/>
            <person name="Suhayda C.G."/>
            <person name="Omura M."/>
        </authorList>
    </citation>
    <scope>NUCLEOTIDE SEQUENCE [MRNA]</scope>
    <source>
        <strain>cv. Miyagawa-Wase</strain>
        <tissue>Albedo</tissue>
    </source>
</reference>
<protein>
    <recommendedName>
        <fullName>Limonoid UDP-glucosyltransferase</fullName>
        <shortName>LGTase</shortName>
        <shortName>Limonoid GTase</shortName>
        <shortName>Limonoid glucosyltransferase</shortName>
        <ecNumber>2.4.1.210</ecNumber>
    </recommendedName>
</protein>
<sequence length="511" mass="57478">MGTESLVHVLLVSFPGHGHVNPLLRLGRLLASKGFFLTLTTPESFGKQMRKAGNFTYEPTPVGDGFIRFEFFEDGWDEDDPRREDLDQYMAQLELIGKQVIPKIIKKSAEEYRPVSCLINNPFIPWVSDVAESLGLPSAMLWVQSCACFAAYYHYFHGLVPFPSEKEPEIDVQLPCMPLLKHDEMPSFLHPSTPYPFLRRAILGQYENLGKPFCILLDTFYELEKEIIDYMAKICPIKPVGPLFKNPKAPTLTVRDDCMKPDECIDWLDKKPPSSVVYISFGTVVYLKQEQVEEIGYALLNSGISFLWVMKPPPEDSGVKIVDLPDGFLEKVGDKGKVVQWSPQEKVLAHPSVACFVTHCGWNSTMESLASGVPVITFPQWGDQVTDAMYLCDVFKTGLRLCRGEAENRIISRDEVEKCLLEATAGPKAVALEENALKWKKEAEEAVADGGSSDRNIQAFVDEVRRTSVEIITSSKSKSIHRVKELVEKTATATANDKVELVESRRTRVQY</sequence>
<dbReference type="EC" id="2.4.1.210"/>
<dbReference type="EMBL" id="AB033758">
    <property type="protein sequence ID" value="BAA93039.1"/>
    <property type="molecule type" value="mRNA"/>
</dbReference>
<dbReference type="SMR" id="Q9MB73"/>
<dbReference type="CAZy" id="GT1">
    <property type="family name" value="Glycosyltransferase Family 1"/>
</dbReference>
<dbReference type="BRENDA" id="2.4.1.210">
    <property type="organism ID" value="1428"/>
</dbReference>
<dbReference type="GO" id="GO:0050645">
    <property type="term" value="F:limonoid glucosyltransferase activity"/>
    <property type="evidence" value="ECO:0007669"/>
    <property type="project" value="UniProtKB-EC"/>
</dbReference>
<dbReference type="GO" id="GO:0080043">
    <property type="term" value="F:quercetin 3-O-glucosyltransferase activity"/>
    <property type="evidence" value="ECO:0007669"/>
    <property type="project" value="TreeGrafter"/>
</dbReference>
<dbReference type="GO" id="GO:0080044">
    <property type="term" value="F:quercetin 7-O-glucosyltransferase activity"/>
    <property type="evidence" value="ECO:0007669"/>
    <property type="project" value="TreeGrafter"/>
</dbReference>
<dbReference type="CDD" id="cd03784">
    <property type="entry name" value="GT1_Gtf-like"/>
    <property type="match status" value="1"/>
</dbReference>
<dbReference type="FunFam" id="3.40.50.2000:FF:000019">
    <property type="entry name" value="Glycosyltransferase"/>
    <property type="match status" value="1"/>
</dbReference>
<dbReference type="FunFam" id="3.40.50.2000:FF:000101">
    <property type="entry name" value="Glycosyltransferase"/>
    <property type="match status" value="1"/>
</dbReference>
<dbReference type="Gene3D" id="3.40.50.2000">
    <property type="entry name" value="Glycogen Phosphorylase B"/>
    <property type="match status" value="2"/>
</dbReference>
<dbReference type="InterPro" id="IPR002213">
    <property type="entry name" value="UDP_glucos_trans"/>
</dbReference>
<dbReference type="InterPro" id="IPR035595">
    <property type="entry name" value="UDP_glycos_trans_CS"/>
</dbReference>
<dbReference type="PANTHER" id="PTHR11926">
    <property type="entry name" value="GLUCOSYL/GLUCURONOSYL TRANSFERASES"/>
    <property type="match status" value="1"/>
</dbReference>
<dbReference type="PANTHER" id="PTHR11926:SF986">
    <property type="entry name" value="UDP-GLYCOSYLTRANSFERASE 84A1"/>
    <property type="match status" value="1"/>
</dbReference>
<dbReference type="Pfam" id="PF00201">
    <property type="entry name" value="UDPGT"/>
    <property type="match status" value="1"/>
</dbReference>
<dbReference type="SUPFAM" id="SSF53756">
    <property type="entry name" value="UDP-Glycosyltransferase/glycogen phosphorylase"/>
    <property type="match status" value="1"/>
</dbReference>
<dbReference type="PROSITE" id="PS00375">
    <property type="entry name" value="UDPGT"/>
    <property type="match status" value="1"/>
</dbReference>
<accession>Q9MB73</accession>